<name>RECR_BORPD</name>
<gene>
    <name evidence="1" type="primary">recR</name>
    <name type="ordered locus">Bpet3551</name>
</gene>
<sequence length="202" mass="21997">MDPQLPEPEPLVSLIEALRRLPGVGVRSARRMAYHLMQHDLQGADMLGRALAGAVQNLRHCARCNSFTEDDICATCANPKRDPSVLCVVETPADQNMIEASHGYRGLYYVLMGRVAPLEGIGPRELDFQRLLERASDGVVREVILATNFTAEGETTAHFLGEVLAGKGLKVTRLARGVPAGSELEYVDAGTIAWALMERKSA</sequence>
<organism>
    <name type="scientific">Bordetella petrii (strain ATCC BAA-461 / DSM 12804 / CCUG 43448)</name>
    <dbReference type="NCBI Taxonomy" id="340100"/>
    <lineage>
        <taxon>Bacteria</taxon>
        <taxon>Pseudomonadati</taxon>
        <taxon>Pseudomonadota</taxon>
        <taxon>Betaproteobacteria</taxon>
        <taxon>Burkholderiales</taxon>
        <taxon>Alcaligenaceae</taxon>
        <taxon>Bordetella</taxon>
    </lineage>
</organism>
<proteinExistence type="inferred from homology"/>
<accession>A9HZ10</accession>
<feature type="chain" id="PRO_1000089706" description="Recombination protein RecR">
    <location>
        <begin position="1"/>
        <end position="202"/>
    </location>
</feature>
<feature type="domain" description="Toprim" evidence="1">
    <location>
        <begin position="84"/>
        <end position="179"/>
    </location>
</feature>
<feature type="zinc finger region" description="C4-type" evidence="1">
    <location>
        <begin position="61"/>
        <end position="76"/>
    </location>
</feature>
<reference key="1">
    <citation type="journal article" date="2008" name="BMC Genomics">
        <title>The missing link: Bordetella petrii is endowed with both the metabolic versatility of environmental bacteria and virulence traits of pathogenic Bordetellae.</title>
        <authorList>
            <person name="Gross R."/>
            <person name="Guzman C.A."/>
            <person name="Sebaihia M."/>
            <person name="Martin dos Santos V.A.P."/>
            <person name="Pieper D.H."/>
            <person name="Koebnik R."/>
            <person name="Lechner M."/>
            <person name="Bartels D."/>
            <person name="Buhrmester J."/>
            <person name="Choudhuri J.V."/>
            <person name="Ebensen T."/>
            <person name="Gaigalat L."/>
            <person name="Herrmann S."/>
            <person name="Khachane A.N."/>
            <person name="Larisch C."/>
            <person name="Link S."/>
            <person name="Linke B."/>
            <person name="Meyer F."/>
            <person name="Mormann S."/>
            <person name="Nakunst D."/>
            <person name="Rueckert C."/>
            <person name="Schneiker-Bekel S."/>
            <person name="Schulze K."/>
            <person name="Voerholter F.-J."/>
            <person name="Yevsa T."/>
            <person name="Engle J.T."/>
            <person name="Goldman W.E."/>
            <person name="Puehler A."/>
            <person name="Goebel U.B."/>
            <person name="Goesmann A."/>
            <person name="Bloecker H."/>
            <person name="Kaiser O."/>
            <person name="Martinez-Arias R."/>
        </authorList>
    </citation>
    <scope>NUCLEOTIDE SEQUENCE [LARGE SCALE GENOMIC DNA]</scope>
    <source>
        <strain>ATCC BAA-461 / DSM 12804 / CCUG 43448</strain>
    </source>
</reference>
<keyword id="KW-0227">DNA damage</keyword>
<keyword id="KW-0233">DNA recombination</keyword>
<keyword id="KW-0234">DNA repair</keyword>
<keyword id="KW-0479">Metal-binding</keyword>
<keyword id="KW-0862">Zinc</keyword>
<keyword id="KW-0863">Zinc-finger</keyword>
<protein>
    <recommendedName>
        <fullName evidence="1">Recombination protein RecR</fullName>
    </recommendedName>
</protein>
<evidence type="ECO:0000255" key="1">
    <source>
        <dbReference type="HAMAP-Rule" id="MF_00017"/>
    </source>
</evidence>
<dbReference type="EMBL" id="AM902716">
    <property type="protein sequence ID" value="CAP43894.1"/>
    <property type="molecule type" value="Genomic_DNA"/>
</dbReference>
<dbReference type="SMR" id="A9HZ10"/>
<dbReference type="STRING" id="94624.Bpet3551"/>
<dbReference type="KEGG" id="bpt:Bpet3551"/>
<dbReference type="eggNOG" id="COG0353">
    <property type="taxonomic scope" value="Bacteria"/>
</dbReference>
<dbReference type="Proteomes" id="UP000001225">
    <property type="component" value="Chromosome"/>
</dbReference>
<dbReference type="GO" id="GO:0003677">
    <property type="term" value="F:DNA binding"/>
    <property type="evidence" value="ECO:0007669"/>
    <property type="project" value="UniProtKB-UniRule"/>
</dbReference>
<dbReference type="GO" id="GO:0008270">
    <property type="term" value="F:zinc ion binding"/>
    <property type="evidence" value="ECO:0007669"/>
    <property type="project" value="UniProtKB-KW"/>
</dbReference>
<dbReference type="GO" id="GO:0006310">
    <property type="term" value="P:DNA recombination"/>
    <property type="evidence" value="ECO:0007669"/>
    <property type="project" value="UniProtKB-UniRule"/>
</dbReference>
<dbReference type="GO" id="GO:0006281">
    <property type="term" value="P:DNA repair"/>
    <property type="evidence" value="ECO:0007669"/>
    <property type="project" value="UniProtKB-UniRule"/>
</dbReference>
<dbReference type="CDD" id="cd01025">
    <property type="entry name" value="TOPRIM_recR"/>
    <property type="match status" value="1"/>
</dbReference>
<dbReference type="Gene3D" id="3.40.1360.10">
    <property type="match status" value="1"/>
</dbReference>
<dbReference type="Gene3D" id="1.10.8.420">
    <property type="entry name" value="RecR Domain 1"/>
    <property type="match status" value="1"/>
</dbReference>
<dbReference type="HAMAP" id="MF_00017">
    <property type="entry name" value="RecR"/>
    <property type="match status" value="1"/>
</dbReference>
<dbReference type="InterPro" id="IPR000093">
    <property type="entry name" value="DNA_Rcmb_RecR"/>
</dbReference>
<dbReference type="InterPro" id="IPR023627">
    <property type="entry name" value="Rcmb_RecR"/>
</dbReference>
<dbReference type="InterPro" id="IPR015967">
    <property type="entry name" value="Rcmb_RecR_Znf"/>
</dbReference>
<dbReference type="InterPro" id="IPR006171">
    <property type="entry name" value="TOPRIM_dom"/>
</dbReference>
<dbReference type="InterPro" id="IPR034137">
    <property type="entry name" value="TOPRIM_RecR"/>
</dbReference>
<dbReference type="NCBIfam" id="TIGR00615">
    <property type="entry name" value="recR"/>
    <property type="match status" value="1"/>
</dbReference>
<dbReference type="PANTHER" id="PTHR30446">
    <property type="entry name" value="RECOMBINATION PROTEIN RECR"/>
    <property type="match status" value="1"/>
</dbReference>
<dbReference type="PANTHER" id="PTHR30446:SF0">
    <property type="entry name" value="RECOMBINATION PROTEIN RECR"/>
    <property type="match status" value="1"/>
</dbReference>
<dbReference type="Pfam" id="PF21175">
    <property type="entry name" value="RecR_C"/>
    <property type="match status" value="1"/>
</dbReference>
<dbReference type="Pfam" id="PF21176">
    <property type="entry name" value="RecR_HhH"/>
    <property type="match status" value="1"/>
</dbReference>
<dbReference type="Pfam" id="PF02132">
    <property type="entry name" value="RecR_ZnF"/>
    <property type="match status" value="1"/>
</dbReference>
<dbReference type="Pfam" id="PF13662">
    <property type="entry name" value="Toprim_4"/>
    <property type="match status" value="1"/>
</dbReference>
<dbReference type="SMART" id="SM00493">
    <property type="entry name" value="TOPRIM"/>
    <property type="match status" value="1"/>
</dbReference>
<dbReference type="SUPFAM" id="SSF111304">
    <property type="entry name" value="Recombination protein RecR"/>
    <property type="match status" value="1"/>
</dbReference>
<dbReference type="PROSITE" id="PS50880">
    <property type="entry name" value="TOPRIM"/>
    <property type="match status" value="1"/>
</dbReference>
<comment type="function">
    <text evidence="1">May play a role in DNA repair. It seems to be involved in an RecBC-independent recombinational process of DNA repair. It may act with RecF and RecO.</text>
</comment>
<comment type="similarity">
    <text evidence="1">Belongs to the RecR family.</text>
</comment>